<accession>B3DVH5</accession>
<comment type="function">
    <text evidence="1">Specifically methylates guanosine-37 in various tRNAs.</text>
</comment>
<comment type="catalytic activity">
    <reaction evidence="1">
        <text>guanosine(37) in tRNA + S-adenosyl-L-methionine = N(1)-methylguanosine(37) in tRNA + S-adenosyl-L-homocysteine + H(+)</text>
        <dbReference type="Rhea" id="RHEA:36899"/>
        <dbReference type="Rhea" id="RHEA-COMP:10145"/>
        <dbReference type="Rhea" id="RHEA-COMP:10147"/>
        <dbReference type="ChEBI" id="CHEBI:15378"/>
        <dbReference type="ChEBI" id="CHEBI:57856"/>
        <dbReference type="ChEBI" id="CHEBI:59789"/>
        <dbReference type="ChEBI" id="CHEBI:73542"/>
        <dbReference type="ChEBI" id="CHEBI:74269"/>
        <dbReference type="EC" id="2.1.1.228"/>
    </reaction>
</comment>
<comment type="subunit">
    <text evidence="1">Homodimer.</text>
</comment>
<comment type="subcellular location">
    <subcellularLocation>
        <location evidence="1">Cytoplasm</location>
    </subcellularLocation>
</comment>
<comment type="similarity">
    <text evidence="1">Belongs to the RNA methyltransferase TrmD family.</text>
</comment>
<reference key="1">
    <citation type="journal article" date="2008" name="Biol. Direct">
        <title>Complete genome sequence of the extremely acidophilic methanotroph isolate V4, Methylacidiphilum infernorum, a representative of the bacterial phylum Verrucomicrobia.</title>
        <authorList>
            <person name="Hou S."/>
            <person name="Makarova K.S."/>
            <person name="Saw J.H."/>
            <person name="Senin P."/>
            <person name="Ly B.V."/>
            <person name="Zhou Z."/>
            <person name="Ren Y."/>
            <person name="Wang J."/>
            <person name="Galperin M.Y."/>
            <person name="Omelchenko M.V."/>
            <person name="Wolf Y.I."/>
            <person name="Yutin N."/>
            <person name="Koonin E.V."/>
            <person name="Stott M.B."/>
            <person name="Mountain B.W."/>
            <person name="Crowe M.A."/>
            <person name="Smirnova A.V."/>
            <person name="Dunfield P.F."/>
            <person name="Feng L."/>
            <person name="Wang L."/>
            <person name="Alam M."/>
        </authorList>
    </citation>
    <scope>NUCLEOTIDE SEQUENCE [LARGE SCALE GENOMIC DNA]</scope>
    <source>
        <strain>Isolate V4</strain>
    </source>
</reference>
<keyword id="KW-0963">Cytoplasm</keyword>
<keyword id="KW-0489">Methyltransferase</keyword>
<keyword id="KW-0949">S-adenosyl-L-methionine</keyword>
<keyword id="KW-0808">Transferase</keyword>
<keyword id="KW-0819">tRNA processing</keyword>
<evidence type="ECO:0000255" key="1">
    <source>
        <dbReference type="HAMAP-Rule" id="MF_00605"/>
    </source>
</evidence>
<organism>
    <name type="scientific">Methylacidiphilum infernorum (isolate V4)</name>
    <name type="common">Methylokorus infernorum (strain V4)</name>
    <dbReference type="NCBI Taxonomy" id="481448"/>
    <lineage>
        <taxon>Bacteria</taxon>
        <taxon>Pseudomonadati</taxon>
        <taxon>Verrucomicrobiota</taxon>
        <taxon>Methylacidiphilae</taxon>
        <taxon>Methylacidiphilales</taxon>
        <taxon>Methylacidiphilaceae</taxon>
        <taxon>Methylacidiphilum (ex Ratnadevi et al. 2023)</taxon>
    </lineage>
</organism>
<dbReference type="EC" id="2.1.1.228" evidence="1"/>
<dbReference type="EMBL" id="CP000975">
    <property type="protein sequence ID" value="ACD83328.1"/>
    <property type="molecule type" value="Genomic_DNA"/>
</dbReference>
<dbReference type="RefSeq" id="WP_012463610.1">
    <property type="nucleotide sequence ID" value="NC_010794.1"/>
</dbReference>
<dbReference type="SMR" id="B3DVH5"/>
<dbReference type="STRING" id="481448.Minf_1274"/>
<dbReference type="KEGG" id="min:Minf_1274"/>
<dbReference type="eggNOG" id="COG0336">
    <property type="taxonomic scope" value="Bacteria"/>
</dbReference>
<dbReference type="HOGENOM" id="CLU_047363_0_1_0"/>
<dbReference type="OrthoDB" id="9807416at2"/>
<dbReference type="Proteomes" id="UP000009149">
    <property type="component" value="Chromosome"/>
</dbReference>
<dbReference type="GO" id="GO:0005829">
    <property type="term" value="C:cytosol"/>
    <property type="evidence" value="ECO:0007669"/>
    <property type="project" value="TreeGrafter"/>
</dbReference>
<dbReference type="GO" id="GO:0052906">
    <property type="term" value="F:tRNA (guanine(37)-N1)-methyltransferase activity"/>
    <property type="evidence" value="ECO:0007669"/>
    <property type="project" value="UniProtKB-UniRule"/>
</dbReference>
<dbReference type="GO" id="GO:0002939">
    <property type="term" value="P:tRNA N1-guanine methylation"/>
    <property type="evidence" value="ECO:0007669"/>
    <property type="project" value="TreeGrafter"/>
</dbReference>
<dbReference type="CDD" id="cd18080">
    <property type="entry name" value="TrmD-like"/>
    <property type="match status" value="1"/>
</dbReference>
<dbReference type="FunFam" id="3.40.1280.10:FF:000001">
    <property type="entry name" value="tRNA (guanine-N(1)-)-methyltransferase"/>
    <property type="match status" value="1"/>
</dbReference>
<dbReference type="Gene3D" id="3.40.1280.10">
    <property type="match status" value="1"/>
</dbReference>
<dbReference type="Gene3D" id="1.10.1270.20">
    <property type="entry name" value="tRNA(m1g37)methyltransferase, domain 2"/>
    <property type="match status" value="1"/>
</dbReference>
<dbReference type="HAMAP" id="MF_00605">
    <property type="entry name" value="TrmD"/>
    <property type="match status" value="1"/>
</dbReference>
<dbReference type="InterPro" id="IPR029028">
    <property type="entry name" value="Alpha/beta_knot_MTases"/>
</dbReference>
<dbReference type="InterPro" id="IPR023148">
    <property type="entry name" value="tRNA_m1G_MeTrfase_C_sf"/>
</dbReference>
<dbReference type="InterPro" id="IPR002649">
    <property type="entry name" value="tRNA_m1G_MeTrfase_TrmD"/>
</dbReference>
<dbReference type="InterPro" id="IPR029026">
    <property type="entry name" value="tRNA_m1G_MTases_N"/>
</dbReference>
<dbReference type="InterPro" id="IPR016009">
    <property type="entry name" value="tRNA_MeTrfase_TRMD/TRM10"/>
</dbReference>
<dbReference type="NCBIfam" id="NF000648">
    <property type="entry name" value="PRK00026.1"/>
    <property type="match status" value="1"/>
</dbReference>
<dbReference type="NCBIfam" id="TIGR00088">
    <property type="entry name" value="trmD"/>
    <property type="match status" value="1"/>
</dbReference>
<dbReference type="PANTHER" id="PTHR46417">
    <property type="entry name" value="TRNA (GUANINE-N(1)-)-METHYLTRANSFERASE"/>
    <property type="match status" value="1"/>
</dbReference>
<dbReference type="PANTHER" id="PTHR46417:SF1">
    <property type="entry name" value="TRNA (GUANINE-N(1)-)-METHYLTRANSFERASE"/>
    <property type="match status" value="1"/>
</dbReference>
<dbReference type="Pfam" id="PF01746">
    <property type="entry name" value="tRNA_m1G_MT"/>
    <property type="match status" value="1"/>
</dbReference>
<dbReference type="PIRSF" id="PIRSF000386">
    <property type="entry name" value="tRNA_mtase"/>
    <property type="match status" value="1"/>
</dbReference>
<dbReference type="SUPFAM" id="SSF75217">
    <property type="entry name" value="alpha/beta knot"/>
    <property type="match status" value="1"/>
</dbReference>
<proteinExistence type="inferred from homology"/>
<name>TRMD_METI4</name>
<gene>
    <name evidence="1" type="primary">trmD</name>
    <name type="ordered locus">Minf_1274</name>
</gene>
<sequence>MRIDVVTLNPRIIESASEEGILKQALKKGLLELFVHQLRDYARDKHKTVDDRPYGGGPGMVLKCEPIFEAVEAIGWCKDKDTVVCPSPSGIKFDQQLAKDLSKRNRLIFICGQYEGIDQRVIDQLVDLEICIGDYILSSGTIAALVIIDSVVRLIPGVLGNQDSILDESFEDFLLEGPQYTRPRKFRDWEVPAVLLSGDHRRILLWRKRLSEEKTEKMRKDLWEARKKGERI</sequence>
<feature type="chain" id="PRO_1000130187" description="tRNA (guanine-N(1)-)-methyltransferase">
    <location>
        <begin position="1"/>
        <end position="232"/>
    </location>
</feature>
<feature type="binding site" evidence="1">
    <location>
        <position position="112"/>
    </location>
    <ligand>
        <name>S-adenosyl-L-methionine</name>
        <dbReference type="ChEBI" id="CHEBI:59789"/>
    </ligand>
</feature>
<feature type="binding site" evidence="1">
    <location>
        <begin position="132"/>
        <end position="137"/>
    </location>
    <ligand>
        <name>S-adenosyl-L-methionine</name>
        <dbReference type="ChEBI" id="CHEBI:59789"/>
    </ligand>
</feature>
<protein>
    <recommendedName>
        <fullName evidence="1">tRNA (guanine-N(1)-)-methyltransferase</fullName>
        <ecNumber evidence="1">2.1.1.228</ecNumber>
    </recommendedName>
    <alternativeName>
        <fullName evidence="1">M1G-methyltransferase</fullName>
    </alternativeName>
    <alternativeName>
        <fullName evidence="1">tRNA [GM37] methyltransferase</fullName>
    </alternativeName>
</protein>